<proteinExistence type="inferred from homology"/>
<name>MEP_ASPFC</name>
<feature type="signal peptide" evidence="2">
    <location>
        <begin position="1"/>
        <end position="18"/>
    </location>
</feature>
<feature type="propeptide" id="PRO_0000407176" evidence="1">
    <location>
        <begin position="19"/>
        <end position="245"/>
    </location>
</feature>
<feature type="chain" id="PRO_0000407177" description="Extracellular metalloproteinase mep">
    <location>
        <begin position="246"/>
        <end position="634"/>
    </location>
</feature>
<feature type="active site" evidence="3">
    <location>
        <position position="430"/>
    </location>
</feature>
<feature type="binding site" evidence="3">
    <location>
        <position position="429"/>
    </location>
    <ligand>
        <name>Zn(2+)</name>
        <dbReference type="ChEBI" id="CHEBI:29105"/>
        <note>catalytic</note>
    </ligand>
</feature>
<feature type="binding site" evidence="3">
    <location>
        <position position="433"/>
    </location>
    <ligand>
        <name>Zn(2+)</name>
        <dbReference type="ChEBI" id="CHEBI:29105"/>
        <note>catalytic</note>
    </ligand>
</feature>
<feature type="glycosylation site" description="N-linked (GlcNAc...) asparagine" evidence="2">
    <location>
        <position position="286"/>
    </location>
</feature>
<dbReference type="EC" id="3.4.24.-"/>
<dbReference type="EMBL" id="DS499600">
    <property type="protein sequence ID" value="EDP48635.1"/>
    <property type="molecule type" value="Genomic_DNA"/>
</dbReference>
<dbReference type="SMR" id="B0Y9E2"/>
<dbReference type="Allergome" id="75">
    <property type="allergen name" value="Asp f 5"/>
</dbReference>
<dbReference type="MEROPS" id="M36.001"/>
<dbReference type="GlyCosmos" id="B0Y9E2">
    <property type="glycosylation" value="1 site, No reported glycans"/>
</dbReference>
<dbReference type="EnsemblFungi" id="EDP48635">
    <property type="protein sequence ID" value="EDP48635"/>
    <property type="gene ID" value="AFUB_080720"/>
</dbReference>
<dbReference type="VEuPathDB" id="FungiDB:AFUB_080720"/>
<dbReference type="HOGENOM" id="CLU_012703_3_0_1"/>
<dbReference type="OrthoDB" id="96955at5052"/>
<dbReference type="PhylomeDB" id="B0Y9E2"/>
<dbReference type="Proteomes" id="UP000001699">
    <property type="component" value="Unassembled WGS sequence"/>
</dbReference>
<dbReference type="GO" id="GO:0005576">
    <property type="term" value="C:extracellular region"/>
    <property type="evidence" value="ECO:0007669"/>
    <property type="project" value="UniProtKB-SubCell"/>
</dbReference>
<dbReference type="GO" id="GO:0004222">
    <property type="term" value="F:metalloendopeptidase activity"/>
    <property type="evidence" value="ECO:0007669"/>
    <property type="project" value="InterPro"/>
</dbReference>
<dbReference type="GO" id="GO:0008270">
    <property type="term" value="F:zinc ion binding"/>
    <property type="evidence" value="ECO:0007669"/>
    <property type="project" value="InterPro"/>
</dbReference>
<dbReference type="GO" id="GO:0006508">
    <property type="term" value="P:proteolysis"/>
    <property type="evidence" value="ECO:0007669"/>
    <property type="project" value="UniProtKB-KW"/>
</dbReference>
<dbReference type="CDD" id="cd09596">
    <property type="entry name" value="M36"/>
    <property type="match status" value="1"/>
</dbReference>
<dbReference type="Gene3D" id="3.10.170.10">
    <property type="match status" value="1"/>
</dbReference>
<dbReference type="Gene3D" id="1.10.390.10">
    <property type="entry name" value="Neutral Protease Domain 2"/>
    <property type="match status" value="1"/>
</dbReference>
<dbReference type="InterPro" id="IPR011096">
    <property type="entry name" value="FTP_domain"/>
</dbReference>
<dbReference type="InterPro" id="IPR050371">
    <property type="entry name" value="Fungal_virulence_M36"/>
</dbReference>
<dbReference type="InterPro" id="IPR001842">
    <property type="entry name" value="Peptidase_M36"/>
</dbReference>
<dbReference type="InterPro" id="IPR027268">
    <property type="entry name" value="Peptidase_M4/M1_CTD_sf"/>
</dbReference>
<dbReference type="PANTHER" id="PTHR33478">
    <property type="entry name" value="EXTRACELLULAR METALLOPROTEINASE MEP"/>
    <property type="match status" value="1"/>
</dbReference>
<dbReference type="PANTHER" id="PTHR33478:SF1">
    <property type="entry name" value="EXTRACELLULAR METALLOPROTEINASE MEP"/>
    <property type="match status" value="1"/>
</dbReference>
<dbReference type="Pfam" id="PF07504">
    <property type="entry name" value="FTP"/>
    <property type="match status" value="1"/>
</dbReference>
<dbReference type="Pfam" id="PF02128">
    <property type="entry name" value="Peptidase_M36"/>
    <property type="match status" value="1"/>
</dbReference>
<dbReference type="PRINTS" id="PR00999">
    <property type="entry name" value="FUNGALYSIN"/>
</dbReference>
<dbReference type="SUPFAM" id="SSF55486">
    <property type="entry name" value="Metalloproteases ('zincins'), catalytic domain"/>
    <property type="match status" value="1"/>
</dbReference>
<dbReference type="PROSITE" id="PS00142">
    <property type="entry name" value="ZINC_PROTEASE"/>
    <property type="match status" value="1"/>
</dbReference>
<organism>
    <name type="scientific">Aspergillus fumigatus (strain CBS 144.89 / FGSC A1163 / CEA10)</name>
    <name type="common">Neosartorya fumigata</name>
    <dbReference type="NCBI Taxonomy" id="451804"/>
    <lineage>
        <taxon>Eukaryota</taxon>
        <taxon>Fungi</taxon>
        <taxon>Dikarya</taxon>
        <taxon>Ascomycota</taxon>
        <taxon>Pezizomycotina</taxon>
        <taxon>Eurotiomycetes</taxon>
        <taxon>Eurotiomycetidae</taxon>
        <taxon>Eurotiales</taxon>
        <taxon>Aspergillaceae</taxon>
        <taxon>Aspergillus</taxon>
        <taxon>Aspergillus subgen. Fumigati</taxon>
    </lineage>
</organism>
<accession>B0Y9E2</accession>
<sequence length="634" mass="68708">MRGLLLAGALALPASVFAHPAHQSYGLNRRTVDLNAFRLKSLAKYVNATETVIEAPSSFAPFKPQSYVEVATQHVKMIAPDATFRVVDDHYVGDNGVAHVHFRQTANGLDIDNADFNVNVGKDGKVFSYGNSFYTGQIPSSAALTKRDFSDPVTALKGTTNTLQLPITVDSASSESTEEKESYVFKGVSGTVSDPKAKLVYFVKDDGTLALAWRVETDIDSNWLLTYIDAKSGEEIHGVVDYVAEADYQVYAWGINDPTEGERTVIKDPWDSVASEFTWISDGSTNYTTSRGNNGIAQSNPSGGSSYLNNYRPSSSSLSFKYPYSVSSSPPSSYIDASIIQLFYTANIYHDLLYTLGFTEKAGNFEYNTNGQGGLGNDYVILNAQDGSGTNNANFATPPDGQPGRMRMYVWTESTPYRDGSFEAGIVIHEYTHGLSNRLTGGPANSNCLNALESGGMGEGWSDFMATAIRLKPGDKRSTDYTMGEWASNRAGGIRQYPYSTSLSTNPLTYTSVNSLNAVHAIGTVWASMLYEVLWNLIDKHGKNDAPKPTLRDGVPTDGKYLAMKLVMDGMALQPCNPNFVQARDAILDADTALTGGENQCEIWTAFAKRGLGAGAKYSSRNRVGSTEVPSGVC</sequence>
<comment type="function">
    <text evidence="1">Secreted metalloproteinase that allows assimilation of proteinaceous substrates and probably acts as a virulence factor.</text>
</comment>
<comment type="cofactor">
    <cofactor evidence="1">
        <name>Zn(2+)</name>
        <dbReference type="ChEBI" id="CHEBI:29105"/>
    </cofactor>
    <text evidence="1">Binds 1 zinc ion per subunit.</text>
</comment>
<comment type="subcellular location">
    <subcellularLocation>
        <location evidence="1">Secreted</location>
    </subcellularLocation>
</comment>
<comment type="similarity">
    <text evidence="4">Belongs to the peptidase M36 family.</text>
</comment>
<evidence type="ECO:0000250" key="1"/>
<evidence type="ECO:0000255" key="2"/>
<evidence type="ECO:0000255" key="3">
    <source>
        <dbReference type="PROSITE-ProRule" id="PRU10095"/>
    </source>
</evidence>
<evidence type="ECO:0000305" key="4"/>
<protein>
    <recommendedName>
        <fullName>Extracellular metalloproteinase mep</fullName>
        <ecNumber>3.4.24.-</ecNumber>
    </recommendedName>
    <alternativeName>
        <fullName>Elastinolytic metalloproteinase mep</fullName>
    </alternativeName>
    <alternativeName>
        <fullName>Fungalysin mep</fullName>
    </alternativeName>
</protein>
<gene>
    <name type="primary">mep</name>
    <name type="ORF">AFUB_080720</name>
</gene>
<keyword id="KW-0325">Glycoprotein</keyword>
<keyword id="KW-0378">Hydrolase</keyword>
<keyword id="KW-0479">Metal-binding</keyword>
<keyword id="KW-0482">Metalloprotease</keyword>
<keyword id="KW-0645">Protease</keyword>
<keyword id="KW-0964">Secreted</keyword>
<keyword id="KW-0732">Signal</keyword>
<keyword id="KW-0843">Virulence</keyword>
<keyword id="KW-0862">Zinc</keyword>
<keyword id="KW-0865">Zymogen</keyword>
<reference key="1">
    <citation type="journal article" date="2008" name="PLoS Genet.">
        <title>Genomic islands in the pathogenic filamentous fungus Aspergillus fumigatus.</title>
        <authorList>
            <person name="Fedorova N.D."/>
            <person name="Khaldi N."/>
            <person name="Joardar V.S."/>
            <person name="Maiti R."/>
            <person name="Amedeo P."/>
            <person name="Anderson M.J."/>
            <person name="Crabtree J."/>
            <person name="Silva J.C."/>
            <person name="Badger J.H."/>
            <person name="Albarraq A."/>
            <person name="Angiuoli S."/>
            <person name="Bussey H."/>
            <person name="Bowyer P."/>
            <person name="Cotty P.J."/>
            <person name="Dyer P.S."/>
            <person name="Egan A."/>
            <person name="Galens K."/>
            <person name="Fraser-Liggett C.M."/>
            <person name="Haas B.J."/>
            <person name="Inman J.M."/>
            <person name="Kent R."/>
            <person name="Lemieux S."/>
            <person name="Malavazi I."/>
            <person name="Orvis J."/>
            <person name="Roemer T."/>
            <person name="Ronning C.M."/>
            <person name="Sundaram J.P."/>
            <person name="Sutton G."/>
            <person name="Turner G."/>
            <person name="Venter J.C."/>
            <person name="White O.R."/>
            <person name="Whitty B.R."/>
            <person name="Youngman P."/>
            <person name="Wolfe K.H."/>
            <person name="Goldman G.H."/>
            <person name="Wortman J.R."/>
            <person name="Jiang B."/>
            <person name="Denning D.W."/>
            <person name="Nierman W.C."/>
        </authorList>
    </citation>
    <scope>NUCLEOTIDE SEQUENCE [LARGE SCALE GENOMIC DNA]</scope>
    <source>
        <strain>CBS 144.89 / FGSC A1163 / CEA10</strain>
    </source>
</reference>